<gene>
    <name evidence="1" type="primary">nudI</name>
    <name type="ordered locus">SeHA_C2535</name>
</gene>
<proteinExistence type="inferred from homology"/>
<name>NUDI_SALHS</name>
<reference key="1">
    <citation type="journal article" date="2011" name="J. Bacteriol.">
        <title>Comparative genomics of 28 Salmonella enterica isolates: evidence for CRISPR-mediated adaptive sublineage evolution.</title>
        <authorList>
            <person name="Fricke W.F."/>
            <person name="Mammel M.K."/>
            <person name="McDermott P.F."/>
            <person name="Tartera C."/>
            <person name="White D.G."/>
            <person name="Leclerc J.E."/>
            <person name="Ravel J."/>
            <person name="Cebula T.A."/>
        </authorList>
    </citation>
    <scope>NUCLEOTIDE SEQUENCE [LARGE SCALE GENOMIC DNA]</scope>
    <source>
        <strain>SL476</strain>
    </source>
</reference>
<dbReference type="EC" id="3.6.1.9" evidence="1"/>
<dbReference type="EC" id="3.6.1.12" evidence="1"/>
<dbReference type="EC" id="3.6.1.-" evidence="1"/>
<dbReference type="EC" id="3.6.1.23" evidence="1"/>
<dbReference type="EMBL" id="CP001120">
    <property type="protein sequence ID" value="ACF70101.1"/>
    <property type="molecule type" value="Genomic_DNA"/>
</dbReference>
<dbReference type="RefSeq" id="WP_001249906.1">
    <property type="nucleotide sequence ID" value="NC_011083.1"/>
</dbReference>
<dbReference type="SMR" id="B4TBG2"/>
<dbReference type="KEGG" id="seh:SeHA_C2535"/>
<dbReference type="HOGENOM" id="CLU_037162_31_0_6"/>
<dbReference type="Proteomes" id="UP000001866">
    <property type="component" value="Chromosome"/>
</dbReference>
<dbReference type="GO" id="GO:0047840">
    <property type="term" value="F:dCTP diphosphatase activity"/>
    <property type="evidence" value="ECO:0007669"/>
    <property type="project" value="UniProtKB-EC"/>
</dbReference>
<dbReference type="GO" id="GO:0036218">
    <property type="term" value="F:dTTP diphosphatase activity"/>
    <property type="evidence" value="ECO:0007669"/>
    <property type="project" value="RHEA"/>
</dbReference>
<dbReference type="GO" id="GO:0004170">
    <property type="term" value="F:dUTP diphosphatase activity"/>
    <property type="evidence" value="ECO:0007669"/>
    <property type="project" value="UniProtKB-EC"/>
</dbReference>
<dbReference type="GO" id="GO:0000287">
    <property type="term" value="F:magnesium ion binding"/>
    <property type="evidence" value="ECO:0007669"/>
    <property type="project" value="UniProtKB-UniRule"/>
</dbReference>
<dbReference type="CDD" id="cd04696">
    <property type="entry name" value="NUDIX_NudI"/>
    <property type="match status" value="1"/>
</dbReference>
<dbReference type="Gene3D" id="3.90.79.10">
    <property type="entry name" value="Nucleoside Triphosphate Pyrophosphohydrolase"/>
    <property type="match status" value="1"/>
</dbReference>
<dbReference type="HAMAP" id="MF_01846">
    <property type="entry name" value="Nudix_NudI"/>
    <property type="match status" value="1"/>
</dbReference>
<dbReference type="InterPro" id="IPR023781">
    <property type="entry name" value="Nucleoside_triphosphatase_NudI"/>
</dbReference>
<dbReference type="InterPro" id="IPR020476">
    <property type="entry name" value="Nudix_hydrolase"/>
</dbReference>
<dbReference type="InterPro" id="IPR015797">
    <property type="entry name" value="NUDIX_hydrolase-like_dom_sf"/>
</dbReference>
<dbReference type="InterPro" id="IPR020084">
    <property type="entry name" value="NUDIX_hydrolase_CS"/>
</dbReference>
<dbReference type="InterPro" id="IPR000086">
    <property type="entry name" value="NUDIX_hydrolase_dom"/>
</dbReference>
<dbReference type="NCBIfam" id="NF012016">
    <property type="entry name" value="PRK15472.1"/>
    <property type="match status" value="1"/>
</dbReference>
<dbReference type="PANTHER" id="PTHR43046">
    <property type="entry name" value="GDP-MANNOSE MANNOSYL HYDROLASE"/>
    <property type="match status" value="1"/>
</dbReference>
<dbReference type="PANTHER" id="PTHR43046:SF14">
    <property type="entry name" value="MUTT_NUDIX FAMILY PROTEIN"/>
    <property type="match status" value="1"/>
</dbReference>
<dbReference type="Pfam" id="PF00293">
    <property type="entry name" value="NUDIX"/>
    <property type="match status" value="1"/>
</dbReference>
<dbReference type="PRINTS" id="PR00502">
    <property type="entry name" value="NUDIXFAMILY"/>
</dbReference>
<dbReference type="SUPFAM" id="SSF55811">
    <property type="entry name" value="Nudix"/>
    <property type="match status" value="1"/>
</dbReference>
<dbReference type="PROSITE" id="PS51462">
    <property type="entry name" value="NUDIX"/>
    <property type="match status" value="1"/>
</dbReference>
<dbReference type="PROSITE" id="PS00893">
    <property type="entry name" value="NUDIX_BOX"/>
    <property type="match status" value="1"/>
</dbReference>
<accession>B4TBG2</accession>
<feature type="chain" id="PRO_1000188490" description="Nucleoside triphosphatase NudI">
    <location>
        <begin position="1"/>
        <end position="141"/>
    </location>
</feature>
<feature type="domain" description="Nudix hydrolase" evidence="1">
    <location>
        <begin position="1"/>
        <end position="141"/>
    </location>
</feature>
<feature type="short sequence motif" description="Nudix box">
    <location>
        <begin position="38"/>
        <end position="59"/>
    </location>
</feature>
<evidence type="ECO:0000255" key="1">
    <source>
        <dbReference type="HAMAP-Rule" id="MF_01846"/>
    </source>
</evidence>
<protein>
    <recommendedName>
        <fullName evidence="1">Nucleoside triphosphatase NudI</fullName>
        <ecNumber evidence="1">3.6.1.9</ecNumber>
    </recommendedName>
    <alternativeName>
        <fullName evidence="1">Nucleotide diphosphatase NudI</fullName>
    </alternativeName>
    <alternativeName>
        <fullName evidence="1">Pyrimidine deoxynucleoside triphosphate diphosphatase</fullName>
    </alternativeName>
    <alternativeName>
        <fullName evidence="1">dCTP diphosphatase</fullName>
        <ecNumber evidence="1">3.6.1.12</ecNumber>
    </alternativeName>
    <alternativeName>
        <fullName evidence="1">dTTP diphosphatase</fullName>
        <ecNumber evidence="1">3.6.1.-</ecNumber>
    </alternativeName>
    <alternativeName>
        <fullName evidence="1">dUTP diphosphatase</fullName>
        <ecNumber evidence="1">3.6.1.23</ecNumber>
    </alternativeName>
</protein>
<keyword id="KW-0378">Hydrolase</keyword>
<keyword id="KW-0460">Magnesium</keyword>
<comment type="function">
    <text evidence="1">Catalyzes the hydrolysis of nucleoside triphosphates, with a preference for pyrimidine deoxynucleoside triphosphates (dUTP, dTTP and dCTP).</text>
</comment>
<comment type="catalytic activity">
    <reaction evidence="1">
        <text>a ribonucleoside 5'-triphosphate + H2O = a ribonucleoside 5'-phosphate + diphosphate + H(+)</text>
        <dbReference type="Rhea" id="RHEA:23996"/>
        <dbReference type="ChEBI" id="CHEBI:15377"/>
        <dbReference type="ChEBI" id="CHEBI:15378"/>
        <dbReference type="ChEBI" id="CHEBI:33019"/>
        <dbReference type="ChEBI" id="CHEBI:58043"/>
        <dbReference type="ChEBI" id="CHEBI:61557"/>
        <dbReference type="EC" id="3.6.1.9"/>
    </reaction>
</comment>
<comment type="catalytic activity">
    <reaction evidence="1">
        <text>a 2'-deoxyribonucleoside 5'-triphosphate + H2O = a 2'-deoxyribonucleoside 5'-phosphate + diphosphate + H(+)</text>
        <dbReference type="Rhea" id="RHEA:44644"/>
        <dbReference type="ChEBI" id="CHEBI:15377"/>
        <dbReference type="ChEBI" id="CHEBI:15378"/>
        <dbReference type="ChEBI" id="CHEBI:33019"/>
        <dbReference type="ChEBI" id="CHEBI:61560"/>
        <dbReference type="ChEBI" id="CHEBI:65317"/>
        <dbReference type="EC" id="3.6.1.9"/>
    </reaction>
</comment>
<comment type="catalytic activity">
    <reaction evidence="1">
        <text>dUTP + H2O = dUMP + diphosphate + H(+)</text>
        <dbReference type="Rhea" id="RHEA:10248"/>
        <dbReference type="ChEBI" id="CHEBI:15377"/>
        <dbReference type="ChEBI" id="CHEBI:15378"/>
        <dbReference type="ChEBI" id="CHEBI:33019"/>
        <dbReference type="ChEBI" id="CHEBI:61555"/>
        <dbReference type="ChEBI" id="CHEBI:246422"/>
        <dbReference type="EC" id="3.6.1.9"/>
    </reaction>
</comment>
<comment type="catalytic activity">
    <reaction evidence="1">
        <text>dUTP + H2O = dUMP + diphosphate + H(+)</text>
        <dbReference type="Rhea" id="RHEA:10248"/>
        <dbReference type="ChEBI" id="CHEBI:15377"/>
        <dbReference type="ChEBI" id="CHEBI:15378"/>
        <dbReference type="ChEBI" id="CHEBI:33019"/>
        <dbReference type="ChEBI" id="CHEBI:61555"/>
        <dbReference type="ChEBI" id="CHEBI:246422"/>
        <dbReference type="EC" id="3.6.1.23"/>
    </reaction>
</comment>
<comment type="catalytic activity">
    <reaction evidence="1">
        <text>dTTP + H2O = dTMP + diphosphate + H(+)</text>
        <dbReference type="Rhea" id="RHEA:28534"/>
        <dbReference type="ChEBI" id="CHEBI:15377"/>
        <dbReference type="ChEBI" id="CHEBI:15378"/>
        <dbReference type="ChEBI" id="CHEBI:33019"/>
        <dbReference type="ChEBI" id="CHEBI:37568"/>
        <dbReference type="ChEBI" id="CHEBI:63528"/>
        <dbReference type="EC" id="3.6.1.9"/>
    </reaction>
</comment>
<comment type="catalytic activity">
    <reaction evidence="1">
        <text>dCTP + H2O = dCMP + diphosphate + H(+)</text>
        <dbReference type="Rhea" id="RHEA:22636"/>
        <dbReference type="ChEBI" id="CHEBI:15377"/>
        <dbReference type="ChEBI" id="CHEBI:15378"/>
        <dbReference type="ChEBI" id="CHEBI:33019"/>
        <dbReference type="ChEBI" id="CHEBI:57566"/>
        <dbReference type="ChEBI" id="CHEBI:61481"/>
        <dbReference type="EC" id="3.6.1.9"/>
    </reaction>
</comment>
<comment type="catalytic activity">
    <reaction evidence="1">
        <text>dCTP + H2O = dCMP + diphosphate + H(+)</text>
        <dbReference type="Rhea" id="RHEA:22636"/>
        <dbReference type="ChEBI" id="CHEBI:15377"/>
        <dbReference type="ChEBI" id="CHEBI:15378"/>
        <dbReference type="ChEBI" id="CHEBI:33019"/>
        <dbReference type="ChEBI" id="CHEBI:57566"/>
        <dbReference type="ChEBI" id="CHEBI:61481"/>
        <dbReference type="EC" id="3.6.1.12"/>
    </reaction>
</comment>
<comment type="cofactor">
    <cofactor evidence="1">
        <name>Mg(2+)</name>
        <dbReference type="ChEBI" id="CHEBI:18420"/>
    </cofactor>
</comment>
<comment type="subunit">
    <text evidence="1">Monomer.</text>
</comment>
<comment type="similarity">
    <text evidence="1">Belongs to the Nudix hydrolase family. NudI subfamily.</text>
</comment>
<organism>
    <name type="scientific">Salmonella heidelberg (strain SL476)</name>
    <dbReference type="NCBI Taxonomy" id="454169"/>
    <lineage>
        <taxon>Bacteria</taxon>
        <taxon>Pseudomonadati</taxon>
        <taxon>Pseudomonadota</taxon>
        <taxon>Gammaproteobacteria</taxon>
        <taxon>Enterobacterales</taxon>
        <taxon>Enterobacteriaceae</taxon>
        <taxon>Salmonella</taxon>
    </lineage>
</organism>
<sequence>MRQRTIVCPLIQNDGCYLLCKMVDNRGVFPGQWALSGGGVEPGERIEEALRREIREELGEQLILSDITPWTFRDDIRVKTYADGRQEEIYMIYLIFDCVSANRDICINDEFQDYAWVKPEELALYDLNVATRHTLALKGLL</sequence>